<evidence type="ECO:0000255" key="1"/>
<evidence type="ECO:0000305" key="2"/>
<proteinExistence type="inferred from homology"/>
<accession>P52876</accession>
<sequence length="206" mass="22381">MLTAFTAGLLLITVSELGDKTFFIAMILAMRYPRRWVLVGVVGGLAAMTILSVLMGQIFTFLPTRYINYAEVALFLIFGTKLLWDARRIKATANLEEMEDAEKAIASGEKKLKIVPRGWGIVVESFALTFVAEWGDRTQIATIALAASNNAWGVSAGAILGHTICAVIAVMGGKFVAGRISEKTVTLIGGLLFYLFAVVSWWTKIA</sequence>
<dbReference type="EMBL" id="BA000022">
    <property type="protein sequence ID" value="BAA10348.1"/>
    <property type="molecule type" value="Genomic_DNA"/>
</dbReference>
<dbReference type="EMBL" id="U38892">
    <property type="protein sequence ID" value="AAA96398.1"/>
    <property type="molecule type" value="Genomic_DNA"/>
</dbReference>
<dbReference type="PIR" id="S76502">
    <property type="entry name" value="S76502"/>
</dbReference>
<dbReference type="IntAct" id="P52876">
    <property type="interactions" value="4"/>
</dbReference>
<dbReference type="STRING" id="1148.gene:10499849"/>
<dbReference type="TCDB" id="2.A.106.1.1">
    <property type="family name" value="the ca(2+):h(+) antiporter-2 (caca2) family"/>
</dbReference>
<dbReference type="PaxDb" id="1148-1001617"/>
<dbReference type="EnsemblBacteria" id="BAA10348">
    <property type="protein sequence ID" value="BAA10348"/>
    <property type="gene ID" value="BAA10348"/>
</dbReference>
<dbReference type="KEGG" id="syn:sll0615"/>
<dbReference type="eggNOG" id="COG2119">
    <property type="taxonomic scope" value="Bacteria"/>
</dbReference>
<dbReference type="InParanoid" id="P52876"/>
<dbReference type="PhylomeDB" id="P52876"/>
<dbReference type="Proteomes" id="UP000001425">
    <property type="component" value="Chromosome"/>
</dbReference>
<dbReference type="GO" id="GO:0005886">
    <property type="term" value="C:plasma membrane"/>
    <property type="evidence" value="ECO:0007669"/>
    <property type="project" value="UniProtKB-SubCell"/>
</dbReference>
<dbReference type="GO" id="GO:0046873">
    <property type="term" value="F:metal ion transmembrane transporter activity"/>
    <property type="evidence" value="ECO:0000318"/>
    <property type="project" value="GO_Central"/>
</dbReference>
<dbReference type="GO" id="GO:0006816">
    <property type="term" value="P:calcium ion transport"/>
    <property type="evidence" value="ECO:0007669"/>
    <property type="project" value="UniProtKB-ARBA"/>
</dbReference>
<dbReference type="InterPro" id="IPR001727">
    <property type="entry name" value="GDT1-like"/>
</dbReference>
<dbReference type="InterPro" id="IPR049555">
    <property type="entry name" value="GDT1-like_CS"/>
</dbReference>
<dbReference type="PANTHER" id="PTHR12608:SF1">
    <property type="entry name" value="TRANSMEMBRANE PROTEIN 165"/>
    <property type="match status" value="1"/>
</dbReference>
<dbReference type="PANTHER" id="PTHR12608">
    <property type="entry name" value="TRANSMEMBRANE PROTEIN HTP-1 RELATED"/>
    <property type="match status" value="1"/>
</dbReference>
<dbReference type="Pfam" id="PF01169">
    <property type="entry name" value="GDT1"/>
    <property type="match status" value="2"/>
</dbReference>
<dbReference type="PROSITE" id="PS01214">
    <property type="entry name" value="UPF0016"/>
    <property type="match status" value="1"/>
</dbReference>
<comment type="subcellular location">
    <subcellularLocation>
        <location evidence="2">Cell membrane</location>
        <topology evidence="2">Multi-pass membrane protein</topology>
    </subcellularLocation>
</comment>
<comment type="similarity">
    <text evidence="2">Belongs to the GDT1 family.</text>
</comment>
<feature type="chain" id="PRO_0000212470" description="GDT1-like protein sll0615">
    <location>
        <begin position="1"/>
        <end position="206"/>
    </location>
</feature>
<feature type="transmembrane region" description="Helical" evidence="1">
    <location>
        <begin position="36"/>
        <end position="56"/>
    </location>
</feature>
<feature type="transmembrane region" description="Helical" evidence="1">
    <location>
        <begin position="58"/>
        <end position="78"/>
    </location>
</feature>
<feature type="transmembrane region" description="Helical" evidence="1">
    <location>
        <begin position="114"/>
        <end position="134"/>
    </location>
</feature>
<feature type="transmembrane region" description="Helical" evidence="1">
    <location>
        <begin position="151"/>
        <end position="171"/>
    </location>
</feature>
<feature type="transmembrane region" description="Helical" evidence="1">
    <location>
        <begin position="185"/>
        <end position="205"/>
    </location>
</feature>
<gene>
    <name type="ordered locus">sll0615</name>
</gene>
<reference key="1">
    <citation type="journal article" date="1995" name="DNA Res.">
        <title>Sequence analysis of the genome of the unicellular cyanobacterium Synechocystis sp. strain PCC6803. I. Sequence features in the 1 Mb region from map positions 64% to 92% of the genome.</title>
        <authorList>
            <person name="Kaneko T."/>
            <person name="Tanaka A."/>
            <person name="Sato S."/>
            <person name="Kotani H."/>
            <person name="Sazuka T."/>
            <person name="Miyajima N."/>
            <person name="Sugiura M."/>
            <person name="Tabata S."/>
        </authorList>
    </citation>
    <scope>NUCLEOTIDE SEQUENCE [LARGE SCALE GENOMIC DNA]</scope>
    <source>
        <strain>ATCC 27184 / PCC 6803 / N-1</strain>
    </source>
</reference>
<reference key="2">
    <citation type="journal article" date="1996" name="DNA Res.">
        <title>Sequence analysis of the genome of the unicellular cyanobacterium Synechocystis sp. strain PCC6803. II. Sequence determination of the entire genome and assignment of potential protein-coding regions.</title>
        <authorList>
            <person name="Kaneko T."/>
            <person name="Sato S."/>
            <person name="Kotani H."/>
            <person name="Tanaka A."/>
            <person name="Asamizu E."/>
            <person name="Nakamura Y."/>
            <person name="Miyajima N."/>
            <person name="Hirosawa M."/>
            <person name="Sugiura M."/>
            <person name="Sasamoto S."/>
            <person name="Kimura T."/>
            <person name="Hosouchi T."/>
            <person name="Matsuno A."/>
            <person name="Muraki A."/>
            <person name="Nakazaki N."/>
            <person name="Naruo K."/>
            <person name="Okumura S."/>
            <person name="Shimpo S."/>
            <person name="Takeuchi C."/>
            <person name="Wada T."/>
            <person name="Watanabe A."/>
            <person name="Yamada M."/>
            <person name="Yasuda M."/>
            <person name="Tabata S."/>
        </authorList>
    </citation>
    <scope>NUCLEOTIDE SEQUENCE [LARGE SCALE GENOMIC DNA]</scope>
    <source>
        <strain>ATCC 27184 / PCC 6803 / Kazusa</strain>
    </source>
</reference>
<reference key="3">
    <citation type="submission" date="1996-04" db="EMBL/GenBank/DDBJ databases">
        <authorList>
            <person name="Bulteau S."/>
            <person name="Cassier-Chauvat C."/>
            <person name="Chauvat F."/>
        </authorList>
    </citation>
    <scope>NUCLEOTIDE SEQUENCE [GENOMIC DNA]</scope>
</reference>
<name>Y615_SYNY3</name>
<organism>
    <name type="scientific">Synechocystis sp. (strain ATCC 27184 / PCC 6803 / Kazusa)</name>
    <dbReference type="NCBI Taxonomy" id="1111708"/>
    <lineage>
        <taxon>Bacteria</taxon>
        <taxon>Bacillati</taxon>
        <taxon>Cyanobacteriota</taxon>
        <taxon>Cyanophyceae</taxon>
        <taxon>Synechococcales</taxon>
        <taxon>Merismopediaceae</taxon>
        <taxon>Synechocystis</taxon>
    </lineage>
</organism>
<keyword id="KW-1003">Cell membrane</keyword>
<keyword id="KW-0472">Membrane</keyword>
<keyword id="KW-1185">Reference proteome</keyword>
<keyword id="KW-0812">Transmembrane</keyword>
<keyword id="KW-1133">Transmembrane helix</keyword>
<protein>
    <recommendedName>
        <fullName>GDT1-like protein sll0615</fullName>
    </recommendedName>
</protein>